<protein>
    <recommendedName>
        <fullName>Uncharacterized protein RP860</fullName>
    </recommendedName>
</protein>
<dbReference type="EMBL" id="U02878">
    <property type="protein sequence ID" value="AAB81402.1"/>
    <property type="molecule type" value="Unassigned_DNA"/>
</dbReference>
<dbReference type="EMBL" id="AJ235273">
    <property type="protein sequence ID" value="CAA15284.1"/>
    <property type="molecule type" value="Genomic_DNA"/>
</dbReference>
<dbReference type="PIR" id="D71648">
    <property type="entry name" value="D71648"/>
</dbReference>
<dbReference type="RefSeq" id="NP_221208.1">
    <property type="nucleotide sequence ID" value="NC_000963.1"/>
</dbReference>
<dbReference type="RefSeq" id="WP_004596759.1">
    <property type="nucleotide sequence ID" value="NC_000963.1"/>
</dbReference>
<dbReference type="STRING" id="272947.gene:17555929"/>
<dbReference type="EnsemblBacteria" id="CAA15284">
    <property type="protein sequence ID" value="CAA15284"/>
    <property type="gene ID" value="CAA15284"/>
</dbReference>
<dbReference type="KEGG" id="rpr:RP860"/>
<dbReference type="PATRIC" id="fig|272947.5.peg.899"/>
<dbReference type="eggNOG" id="COG0170">
    <property type="taxonomic scope" value="Bacteria"/>
</dbReference>
<dbReference type="HOGENOM" id="CLU_031477_4_1_5"/>
<dbReference type="OrthoDB" id="7166319at2"/>
<dbReference type="Proteomes" id="UP000002480">
    <property type="component" value="Chromosome"/>
</dbReference>
<dbReference type="GO" id="GO:0004143">
    <property type="term" value="F:ATP-dependent diacylglycerol kinase activity"/>
    <property type="evidence" value="ECO:0007669"/>
    <property type="project" value="InterPro"/>
</dbReference>
<dbReference type="InterPro" id="IPR037997">
    <property type="entry name" value="Dgk1-like"/>
</dbReference>
<dbReference type="PANTHER" id="PTHR31303">
    <property type="entry name" value="CTP-DEPENDENT DIACYLGLYCEROL KINASE 1"/>
    <property type="match status" value="1"/>
</dbReference>
<dbReference type="PANTHER" id="PTHR31303:SF1">
    <property type="entry name" value="CTP-DEPENDENT DIACYLGLYCEROL KINASE 1"/>
    <property type="match status" value="1"/>
</dbReference>
<name>Y860_RICPR</name>
<sequence length="204" mass="23197">MKTEDFDFEKKRKIFHISAIIFPMFYLFVPRIAIALLLFIITSITLYLDVIRHNNAKIRKFVTRFFSKIIRLKENNGTFALSGISFMMLGFFLTSILFPKNLVICSWLILIISDCLAALVGIKIGSSLSNGKSIAGSFTFFVSALFISILVYFYLGYNTSFVIIIISCIGATAVEFYSKYLRINDNLSIPLSYCLSTTIFPYIL</sequence>
<feature type="chain" id="PRO_0000101424" description="Uncharacterized protein RP860">
    <location>
        <begin position="1"/>
        <end position="204"/>
    </location>
</feature>
<proteinExistence type="predicted"/>
<gene>
    <name type="ordered locus">RP860</name>
</gene>
<accession>P41078</accession>
<organism>
    <name type="scientific">Rickettsia prowazekii (strain Madrid E)</name>
    <dbReference type="NCBI Taxonomy" id="272947"/>
    <lineage>
        <taxon>Bacteria</taxon>
        <taxon>Pseudomonadati</taxon>
        <taxon>Pseudomonadota</taxon>
        <taxon>Alphaproteobacteria</taxon>
        <taxon>Rickettsiales</taxon>
        <taxon>Rickettsiaceae</taxon>
        <taxon>Rickettsieae</taxon>
        <taxon>Rickettsia</taxon>
        <taxon>typhus group</taxon>
    </lineage>
</organism>
<reference key="1">
    <citation type="journal article" date="1997" name="J. Bacteriol.">
        <title>Transcriptional characterization of the Rickettsia prowazekii major macromolecular synthesis operon.</title>
        <authorList>
            <person name="Shaw E.I."/>
            <person name="Marks G.L."/>
            <person name="Winkler H.H."/>
            <person name="Wood D.O."/>
        </authorList>
    </citation>
    <scope>NUCLEOTIDE SEQUENCE [GENOMIC DNA]</scope>
    <source>
        <strain>Madrid E</strain>
    </source>
</reference>
<reference key="2">
    <citation type="journal article" date="1998" name="Nature">
        <title>The genome sequence of Rickettsia prowazekii and the origin of mitochondria.</title>
        <authorList>
            <person name="Andersson S.G.E."/>
            <person name="Zomorodipour A."/>
            <person name="Andersson J.O."/>
            <person name="Sicheritz-Ponten T."/>
            <person name="Alsmark U.C.M."/>
            <person name="Podowski R.M."/>
            <person name="Naeslund A.K."/>
            <person name="Eriksson A.-S."/>
            <person name="Winkler H.H."/>
            <person name="Kurland C.G."/>
        </authorList>
    </citation>
    <scope>NUCLEOTIDE SEQUENCE [LARGE SCALE GENOMIC DNA]</scope>
    <source>
        <strain>Madrid E</strain>
    </source>
</reference>
<keyword id="KW-1185">Reference proteome</keyword>